<sequence>MNIIDLGLIDFDEAYSIQERLAAEVFAGSGAETLLLLEHPPVYTIGSGGDEGNILDTAIEVRRINRGGDVTYHGPGQLVGYPVIDLARRGCDLHRYLRFIEELLMLVVADFRVAAFRSPGRTGVWTDQGKLASIGVGVRRWVTMHGFALNVTTDLTPFTRINPCGMAGCPVTSLEAEVGGNVKMIEVKARVGARFEGFLDEFMPLRDSEKDRGF</sequence>
<reference key="1">
    <citation type="submission" date="2007-05" db="EMBL/GenBank/DDBJ databases">
        <title>Complete sequence of Geobacter uraniireducens Rf4.</title>
        <authorList>
            <consortium name="US DOE Joint Genome Institute"/>
            <person name="Copeland A."/>
            <person name="Lucas S."/>
            <person name="Lapidus A."/>
            <person name="Barry K."/>
            <person name="Detter J.C."/>
            <person name="Glavina del Rio T."/>
            <person name="Hammon N."/>
            <person name="Israni S."/>
            <person name="Dalin E."/>
            <person name="Tice H."/>
            <person name="Pitluck S."/>
            <person name="Chertkov O."/>
            <person name="Brettin T."/>
            <person name="Bruce D."/>
            <person name="Han C."/>
            <person name="Schmutz J."/>
            <person name="Larimer F."/>
            <person name="Land M."/>
            <person name="Hauser L."/>
            <person name="Kyrpides N."/>
            <person name="Mikhailova N."/>
            <person name="Shelobolina E."/>
            <person name="Aklujkar M."/>
            <person name="Lovley D."/>
            <person name="Richardson P."/>
        </authorList>
    </citation>
    <scope>NUCLEOTIDE SEQUENCE [LARGE SCALE GENOMIC DNA]</scope>
    <source>
        <strain>ATCC BAA-1134 / JCM 13001 / Rf4</strain>
    </source>
</reference>
<name>LIPB_GEOUR</name>
<gene>
    <name evidence="1" type="primary">lipB</name>
    <name type="ordered locus">Gura_1269</name>
</gene>
<protein>
    <recommendedName>
        <fullName evidence="1">Octanoyltransferase</fullName>
        <ecNumber evidence="1">2.3.1.181</ecNumber>
    </recommendedName>
    <alternativeName>
        <fullName evidence="1">Lipoate-protein ligase B</fullName>
    </alternativeName>
    <alternativeName>
        <fullName evidence="1">Lipoyl/octanoyl transferase</fullName>
    </alternativeName>
    <alternativeName>
        <fullName evidence="1">Octanoyl-[acyl-carrier-protein]-protein N-octanoyltransferase</fullName>
    </alternativeName>
</protein>
<evidence type="ECO:0000255" key="1">
    <source>
        <dbReference type="HAMAP-Rule" id="MF_00013"/>
    </source>
</evidence>
<evidence type="ECO:0000255" key="2">
    <source>
        <dbReference type="PROSITE-ProRule" id="PRU01067"/>
    </source>
</evidence>
<comment type="function">
    <text evidence="1">Catalyzes the transfer of endogenously produced octanoic acid from octanoyl-acyl-carrier-protein onto the lipoyl domains of lipoate-dependent enzymes. Lipoyl-ACP can also act as a substrate although octanoyl-ACP is likely to be the physiological substrate.</text>
</comment>
<comment type="catalytic activity">
    <reaction evidence="1">
        <text>octanoyl-[ACP] + L-lysyl-[protein] = N(6)-octanoyl-L-lysyl-[protein] + holo-[ACP] + H(+)</text>
        <dbReference type="Rhea" id="RHEA:17665"/>
        <dbReference type="Rhea" id="RHEA-COMP:9636"/>
        <dbReference type="Rhea" id="RHEA-COMP:9685"/>
        <dbReference type="Rhea" id="RHEA-COMP:9752"/>
        <dbReference type="Rhea" id="RHEA-COMP:9928"/>
        <dbReference type="ChEBI" id="CHEBI:15378"/>
        <dbReference type="ChEBI" id="CHEBI:29969"/>
        <dbReference type="ChEBI" id="CHEBI:64479"/>
        <dbReference type="ChEBI" id="CHEBI:78463"/>
        <dbReference type="ChEBI" id="CHEBI:78809"/>
        <dbReference type="EC" id="2.3.1.181"/>
    </reaction>
</comment>
<comment type="pathway">
    <text evidence="1">Protein modification; protein lipoylation via endogenous pathway; protein N(6)-(lipoyl)lysine from octanoyl-[acyl-carrier-protein]: step 1/2.</text>
</comment>
<comment type="subcellular location">
    <subcellularLocation>
        <location evidence="1">Cytoplasm</location>
    </subcellularLocation>
</comment>
<comment type="miscellaneous">
    <text evidence="1">In the reaction, the free carboxyl group of octanoic acid is attached via an amide linkage to the epsilon-amino group of a specific lysine residue of lipoyl domains of lipoate-dependent enzymes.</text>
</comment>
<comment type="similarity">
    <text evidence="1">Belongs to the LipB family.</text>
</comment>
<organism>
    <name type="scientific">Geotalea uraniireducens (strain Rf4)</name>
    <name type="common">Geobacter uraniireducens</name>
    <dbReference type="NCBI Taxonomy" id="351605"/>
    <lineage>
        <taxon>Bacteria</taxon>
        <taxon>Pseudomonadati</taxon>
        <taxon>Thermodesulfobacteriota</taxon>
        <taxon>Desulfuromonadia</taxon>
        <taxon>Geobacterales</taxon>
        <taxon>Geobacteraceae</taxon>
        <taxon>Geotalea</taxon>
    </lineage>
</organism>
<accession>A5GAC4</accession>
<feature type="chain" id="PRO_1000074003" description="Octanoyltransferase">
    <location>
        <begin position="1"/>
        <end position="214"/>
    </location>
</feature>
<feature type="domain" description="BPL/LPL catalytic" evidence="2">
    <location>
        <begin position="28"/>
        <end position="203"/>
    </location>
</feature>
<feature type="active site" description="Acyl-thioester intermediate" evidence="1">
    <location>
        <position position="164"/>
    </location>
</feature>
<feature type="binding site" evidence="1">
    <location>
        <begin position="66"/>
        <end position="73"/>
    </location>
    <ligand>
        <name>substrate</name>
    </ligand>
</feature>
<feature type="binding site" evidence="1">
    <location>
        <begin position="133"/>
        <end position="135"/>
    </location>
    <ligand>
        <name>substrate</name>
    </ligand>
</feature>
<feature type="binding site" evidence="1">
    <location>
        <begin position="146"/>
        <end position="148"/>
    </location>
    <ligand>
        <name>substrate</name>
    </ligand>
</feature>
<feature type="site" description="Lowers pKa of active site Cys" evidence="1">
    <location>
        <position position="130"/>
    </location>
</feature>
<dbReference type="EC" id="2.3.1.181" evidence="1"/>
<dbReference type="EMBL" id="CP000698">
    <property type="protein sequence ID" value="ABQ25473.1"/>
    <property type="molecule type" value="Genomic_DNA"/>
</dbReference>
<dbReference type="RefSeq" id="WP_011938191.1">
    <property type="nucleotide sequence ID" value="NC_009483.1"/>
</dbReference>
<dbReference type="SMR" id="A5GAC4"/>
<dbReference type="STRING" id="351605.Gura_1269"/>
<dbReference type="KEGG" id="gur:Gura_1269"/>
<dbReference type="HOGENOM" id="CLU_035168_1_3_7"/>
<dbReference type="OrthoDB" id="9787061at2"/>
<dbReference type="UniPathway" id="UPA00538">
    <property type="reaction ID" value="UER00592"/>
</dbReference>
<dbReference type="Proteomes" id="UP000006695">
    <property type="component" value="Chromosome"/>
</dbReference>
<dbReference type="GO" id="GO:0005737">
    <property type="term" value="C:cytoplasm"/>
    <property type="evidence" value="ECO:0007669"/>
    <property type="project" value="UniProtKB-SubCell"/>
</dbReference>
<dbReference type="GO" id="GO:0033819">
    <property type="term" value="F:lipoyl(octanoyl) transferase activity"/>
    <property type="evidence" value="ECO:0007669"/>
    <property type="project" value="UniProtKB-EC"/>
</dbReference>
<dbReference type="GO" id="GO:0036211">
    <property type="term" value="P:protein modification process"/>
    <property type="evidence" value="ECO:0007669"/>
    <property type="project" value="InterPro"/>
</dbReference>
<dbReference type="CDD" id="cd16444">
    <property type="entry name" value="LipB"/>
    <property type="match status" value="1"/>
</dbReference>
<dbReference type="Gene3D" id="3.30.930.10">
    <property type="entry name" value="Bira Bifunctional Protein, Domain 2"/>
    <property type="match status" value="1"/>
</dbReference>
<dbReference type="HAMAP" id="MF_00013">
    <property type="entry name" value="LipB"/>
    <property type="match status" value="1"/>
</dbReference>
<dbReference type="InterPro" id="IPR045864">
    <property type="entry name" value="aa-tRNA-synth_II/BPL/LPL"/>
</dbReference>
<dbReference type="InterPro" id="IPR004143">
    <property type="entry name" value="BPL_LPL_catalytic"/>
</dbReference>
<dbReference type="InterPro" id="IPR000544">
    <property type="entry name" value="Octanoyltransferase"/>
</dbReference>
<dbReference type="InterPro" id="IPR020605">
    <property type="entry name" value="Octanoyltransferase_CS"/>
</dbReference>
<dbReference type="NCBIfam" id="TIGR00214">
    <property type="entry name" value="lipB"/>
    <property type="match status" value="1"/>
</dbReference>
<dbReference type="NCBIfam" id="NF010925">
    <property type="entry name" value="PRK14345.1"/>
    <property type="match status" value="1"/>
</dbReference>
<dbReference type="PANTHER" id="PTHR10993:SF7">
    <property type="entry name" value="LIPOYLTRANSFERASE 2, MITOCHONDRIAL-RELATED"/>
    <property type="match status" value="1"/>
</dbReference>
<dbReference type="PANTHER" id="PTHR10993">
    <property type="entry name" value="OCTANOYLTRANSFERASE"/>
    <property type="match status" value="1"/>
</dbReference>
<dbReference type="Pfam" id="PF21948">
    <property type="entry name" value="LplA-B_cat"/>
    <property type="match status" value="1"/>
</dbReference>
<dbReference type="PIRSF" id="PIRSF016262">
    <property type="entry name" value="LPLase"/>
    <property type="match status" value="1"/>
</dbReference>
<dbReference type="SUPFAM" id="SSF55681">
    <property type="entry name" value="Class II aaRS and biotin synthetases"/>
    <property type="match status" value="1"/>
</dbReference>
<dbReference type="PROSITE" id="PS51733">
    <property type="entry name" value="BPL_LPL_CATALYTIC"/>
    <property type="match status" value="1"/>
</dbReference>
<dbReference type="PROSITE" id="PS01313">
    <property type="entry name" value="LIPB"/>
    <property type="match status" value="1"/>
</dbReference>
<proteinExistence type="inferred from homology"/>
<keyword id="KW-0012">Acyltransferase</keyword>
<keyword id="KW-0963">Cytoplasm</keyword>
<keyword id="KW-1185">Reference proteome</keyword>
<keyword id="KW-0808">Transferase</keyword>